<dbReference type="EC" id="2.7.1.48" evidence="1"/>
<dbReference type="EMBL" id="CP000013">
    <property type="protein sequence ID" value="AAU06874.1"/>
    <property type="molecule type" value="Genomic_DNA"/>
</dbReference>
<dbReference type="RefSeq" id="WP_004792201.1">
    <property type="nucleotide sequence ID" value="NZ_CP028872.1"/>
</dbReference>
<dbReference type="SMR" id="Q662Z7"/>
<dbReference type="GeneID" id="83865490"/>
<dbReference type="KEGG" id="bga:BG0015"/>
<dbReference type="eggNOG" id="COG0572">
    <property type="taxonomic scope" value="Bacteria"/>
</dbReference>
<dbReference type="HOGENOM" id="CLU_021278_1_2_12"/>
<dbReference type="OrthoDB" id="9777642at2"/>
<dbReference type="UniPathway" id="UPA00574">
    <property type="reaction ID" value="UER00637"/>
</dbReference>
<dbReference type="UniPathway" id="UPA00579">
    <property type="reaction ID" value="UER00640"/>
</dbReference>
<dbReference type="Proteomes" id="UP000002276">
    <property type="component" value="Chromosome"/>
</dbReference>
<dbReference type="GO" id="GO:0005737">
    <property type="term" value="C:cytoplasm"/>
    <property type="evidence" value="ECO:0007669"/>
    <property type="project" value="UniProtKB-SubCell"/>
</dbReference>
<dbReference type="GO" id="GO:0005524">
    <property type="term" value="F:ATP binding"/>
    <property type="evidence" value="ECO:0007669"/>
    <property type="project" value="UniProtKB-UniRule"/>
</dbReference>
<dbReference type="GO" id="GO:0043771">
    <property type="term" value="F:cytidine kinase activity"/>
    <property type="evidence" value="ECO:0007669"/>
    <property type="project" value="RHEA"/>
</dbReference>
<dbReference type="GO" id="GO:0004849">
    <property type="term" value="F:uridine kinase activity"/>
    <property type="evidence" value="ECO:0007669"/>
    <property type="project" value="UniProtKB-UniRule"/>
</dbReference>
<dbReference type="GO" id="GO:0044211">
    <property type="term" value="P:CTP salvage"/>
    <property type="evidence" value="ECO:0007669"/>
    <property type="project" value="UniProtKB-UniRule"/>
</dbReference>
<dbReference type="GO" id="GO:0044206">
    <property type="term" value="P:UMP salvage"/>
    <property type="evidence" value="ECO:0007669"/>
    <property type="project" value="UniProtKB-UniRule"/>
</dbReference>
<dbReference type="CDD" id="cd02023">
    <property type="entry name" value="UMPK"/>
    <property type="match status" value="1"/>
</dbReference>
<dbReference type="Gene3D" id="3.40.50.300">
    <property type="entry name" value="P-loop containing nucleotide triphosphate hydrolases"/>
    <property type="match status" value="1"/>
</dbReference>
<dbReference type="HAMAP" id="MF_00551">
    <property type="entry name" value="Uridine_kinase"/>
    <property type="match status" value="1"/>
</dbReference>
<dbReference type="InterPro" id="IPR027417">
    <property type="entry name" value="P-loop_NTPase"/>
</dbReference>
<dbReference type="InterPro" id="IPR006083">
    <property type="entry name" value="PRK/URK"/>
</dbReference>
<dbReference type="InterPro" id="IPR026008">
    <property type="entry name" value="Uridine_kinase"/>
</dbReference>
<dbReference type="InterPro" id="IPR000764">
    <property type="entry name" value="Uridine_kinase-like"/>
</dbReference>
<dbReference type="NCBIfam" id="NF004018">
    <property type="entry name" value="PRK05480.1"/>
    <property type="match status" value="1"/>
</dbReference>
<dbReference type="NCBIfam" id="TIGR00235">
    <property type="entry name" value="udk"/>
    <property type="match status" value="1"/>
</dbReference>
<dbReference type="PANTHER" id="PTHR10285">
    <property type="entry name" value="URIDINE KINASE"/>
    <property type="match status" value="1"/>
</dbReference>
<dbReference type="Pfam" id="PF00485">
    <property type="entry name" value="PRK"/>
    <property type="match status" value="1"/>
</dbReference>
<dbReference type="PRINTS" id="PR00988">
    <property type="entry name" value="URIDINKINASE"/>
</dbReference>
<dbReference type="SUPFAM" id="SSF52540">
    <property type="entry name" value="P-loop containing nucleoside triphosphate hydrolases"/>
    <property type="match status" value="1"/>
</dbReference>
<proteinExistence type="inferred from homology"/>
<comment type="catalytic activity">
    <reaction evidence="1">
        <text>uridine + ATP = UMP + ADP + H(+)</text>
        <dbReference type="Rhea" id="RHEA:16825"/>
        <dbReference type="ChEBI" id="CHEBI:15378"/>
        <dbReference type="ChEBI" id="CHEBI:16704"/>
        <dbReference type="ChEBI" id="CHEBI:30616"/>
        <dbReference type="ChEBI" id="CHEBI:57865"/>
        <dbReference type="ChEBI" id="CHEBI:456216"/>
        <dbReference type="EC" id="2.7.1.48"/>
    </reaction>
</comment>
<comment type="catalytic activity">
    <reaction evidence="1">
        <text>cytidine + ATP = CMP + ADP + H(+)</text>
        <dbReference type="Rhea" id="RHEA:24674"/>
        <dbReference type="ChEBI" id="CHEBI:15378"/>
        <dbReference type="ChEBI" id="CHEBI:17562"/>
        <dbReference type="ChEBI" id="CHEBI:30616"/>
        <dbReference type="ChEBI" id="CHEBI:60377"/>
        <dbReference type="ChEBI" id="CHEBI:456216"/>
        <dbReference type="EC" id="2.7.1.48"/>
    </reaction>
</comment>
<comment type="pathway">
    <text evidence="1">Pyrimidine metabolism; CTP biosynthesis via salvage pathway; CTP from cytidine: step 1/3.</text>
</comment>
<comment type="pathway">
    <text evidence="1">Pyrimidine metabolism; UMP biosynthesis via salvage pathway; UMP from uridine: step 1/1.</text>
</comment>
<comment type="subcellular location">
    <subcellularLocation>
        <location evidence="1">Cytoplasm</location>
    </subcellularLocation>
</comment>
<comment type="similarity">
    <text evidence="1">Belongs to the uridine kinase family.</text>
</comment>
<evidence type="ECO:0000255" key="1">
    <source>
        <dbReference type="HAMAP-Rule" id="MF_00551"/>
    </source>
</evidence>
<sequence length="206" mass="23917">MAKIIGISGGSGSGKTTVVSKISEFIPEFVLISQDNYYKSVGDYEYEFSKVNFDHPDAFDNNLFYEHLKNLKKNSPIDMPLYDFINHKRQLKTVMVVPTPVIIVEGIMIFVEERVRNLIDLKIYIDTPNDIRFIRRLKRDISKRGRTLESVIDQYLNTTRWGYYRFIEPTKEYADLIIPEGGHNDKALYVLSTFLKSLSKEGLDFV</sequence>
<organism>
    <name type="scientific">Borrelia garinii subsp. bavariensis (strain ATCC BAA-2496 / DSM 23469 / PBi)</name>
    <name type="common">Borreliella bavariensis</name>
    <dbReference type="NCBI Taxonomy" id="290434"/>
    <lineage>
        <taxon>Bacteria</taxon>
        <taxon>Pseudomonadati</taxon>
        <taxon>Spirochaetota</taxon>
        <taxon>Spirochaetia</taxon>
        <taxon>Spirochaetales</taxon>
        <taxon>Borreliaceae</taxon>
        <taxon>Borreliella</taxon>
    </lineage>
</organism>
<feature type="chain" id="PRO_1000017869" description="Uridine kinase">
    <location>
        <begin position="1"/>
        <end position="206"/>
    </location>
</feature>
<feature type="binding site" evidence="1">
    <location>
        <begin position="9"/>
        <end position="16"/>
    </location>
    <ligand>
        <name>ATP</name>
        <dbReference type="ChEBI" id="CHEBI:30616"/>
    </ligand>
</feature>
<keyword id="KW-0067">ATP-binding</keyword>
<keyword id="KW-0963">Cytoplasm</keyword>
<keyword id="KW-0418">Kinase</keyword>
<keyword id="KW-0547">Nucleotide-binding</keyword>
<keyword id="KW-0808">Transferase</keyword>
<gene>
    <name evidence="1" type="primary">udk</name>
    <name type="ordered locus">BG0015</name>
</gene>
<reference key="1">
    <citation type="journal article" date="2004" name="Nucleic Acids Res.">
        <title>Comparative analysis of the Borrelia garinii genome.</title>
        <authorList>
            <person name="Gloeckner G."/>
            <person name="Lehmann R."/>
            <person name="Romualdi A."/>
            <person name="Pradella S."/>
            <person name="Schulte-Spechtel U."/>
            <person name="Schilhabel M."/>
            <person name="Wilske B."/>
            <person name="Suehnel J."/>
            <person name="Platzer M."/>
        </authorList>
    </citation>
    <scope>NUCLEOTIDE SEQUENCE [LARGE SCALE GENOMIC DNA]</scope>
    <source>
        <strain>ATCC BAA-2496 / DSM 23469 / PBi</strain>
    </source>
</reference>
<accession>Q662Z7</accession>
<protein>
    <recommendedName>
        <fullName evidence="1">Uridine kinase</fullName>
        <ecNumber evidence="1">2.7.1.48</ecNumber>
    </recommendedName>
    <alternativeName>
        <fullName evidence="1">Cytidine monophosphokinase</fullName>
    </alternativeName>
    <alternativeName>
        <fullName evidence="1">Uridine monophosphokinase</fullName>
    </alternativeName>
</protein>
<name>URK_BORGP</name>